<gene>
    <name evidence="1" type="primary">lpxD</name>
    <name type="ordered locus">RC0010</name>
</gene>
<dbReference type="EC" id="2.3.1.191" evidence="1"/>
<dbReference type="EMBL" id="AE006914">
    <property type="protein sequence ID" value="AAL02548.1"/>
    <property type="molecule type" value="Genomic_DNA"/>
</dbReference>
<dbReference type="PIR" id="B97701">
    <property type="entry name" value="B97701"/>
</dbReference>
<dbReference type="RefSeq" id="WP_010976698.1">
    <property type="nucleotide sequence ID" value="NC_003103.1"/>
</dbReference>
<dbReference type="SMR" id="Q92JQ7"/>
<dbReference type="GeneID" id="928656"/>
<dbReference type="KEGG" id="rco:RC0010"/>
<dbReference type="PATRIC" id="fig|272944.4.peg.9"/>
<dbReference type="HOGENOM" id="CLU_049865_0_0_5"/>
<dbReference type="UniPathway" id="UPA00973"/>
<dbReference type="Proteomes" id="UP000000816">
    <property type="component" value="Chromosome"/>
</dbReference>
<dbReference type="GO" id="GO:0016020">
    <property type="term" value="C:membrane"/>
    <property type="evidence" value="ECO:0007669"/>
    <property type="project" value="GOC"/>
</dbReference>
<dbReference type="GO" id="GO:0016410">
    <property type="term" value="F:N-acyltransferase activity"/>
    <property type="evidence" value="ECO:0007669"/>
    <property type="project" value="InterPro"/>
</dbReference>
<dbReference type="GO" id="GO:0009245">
    <property type="term" value="P:lipid A biosynthetic process"/>
    <property type="evidence" value="ECO:0007669"/>
    <property type="project" value="UniProtKB-UniRule"/>
</dbReference>
<dbReference type="CDD" id="cd03352">
    <property type="entry name" value="LbH_LpxD"/>
    <property type="match status" value="1"/>
</dbReference>
<dbReference type="Gene3D" id="2.160.10.10">
    <property type="entry name" value="Hexapeptide repeat proteins"/>
    <property type="match status" value="1"/>
</dbReference>
<dbReference type="Gene3D" id="3.40.1390.10">
    <property type="entry name" value="MurE/MurF, N-terminal domain"/>
    <property type="match status" value="1"/>
</dbReference>
<dbReference type="HAMAP" id="MF_00523">
    <property type="entry name" value="LpxD"/>
    <property type="match status" value="1"/>
</dbReference>
<dbReference type="InterPro" id="IPR001451">
    <property type="entry name" value="Hexapep"/>
</dbReference>
<dbReference type="InterPro" id="IPR018357">
    <property type="entry name" value="Hexapep_transf_CS"/>
</dbReference>
<dbReference type="InterPro" id="IPR007691">
    <property type="entry name" value="LpxD"/>
</dbReference>
<dbReference type="InterPro" id="IPR011004">
    <property type="entry name" value="Trimer_LpxA-like_sf"/>
</dbReference>
<dbReference type="InterPro" id="IPR020573">
    <property type="entry name" value="UDP_GlcNAc_AcTrfase_non-rep"/>
</dbReference>
<dbReference type="NCBIfam" id="TIGR01853">
    <property type="entry name" value="lipid_A_lpxD"/>
    <property type="match status" value="1"/>
</dbReference>
<dbReference type="NCBIfam" id="NF002060">
    <property type="entry name" value="PRK00892.1"/>
    <property type="match status" value="1"/>
</dbReference>
<dbReference type="PANTHER" id="PTHR43378">
    <property type="entry name" value="UDP-3-O-ACYLGLUCOSAMINE N-ACYLTRANSFERASE"/>
    <property type="match status" value="1"/>
</dbReference>
<dbReference type="PANTHER" id="PTHR43378:SF2">
    <property type="entry name" value="UDP-3-O-ACYLGLUCOSAMINE N-ACYLTRANSFERASE 1, MITOCHONDRIAL-RELATED"/>
    <property type="match status" value="1"/>
</dbReference>
<dbReference type="Pfam" id="PF00132">
    <property type="entry name" value="Hexapep"/>
    <property type="match status" value="1"/>
</dbReference>
<dbReference type="Pfam" id="PF04613">
    <property type="entry name" value="LpxD"/>
    <property type="match status" value="1"/>
</dbReference>
<dbReference type="SUPFAM" id="SSF51161">
    <property type="entry name" value="Trimeric LpxA-like enzymes"/>
    <property type="match status" value="1"/>
</dbReference>
<dbReference type="PROSITE" id="PS00101">
    <property type="entry name" value="HEXAPEP_TRANSFERASES"/>
    <property type="match status" value="2"/>
</dbReference>
<name>LPXD_RICCN</name>
<protein>
    <recommendedName>
        <fullName evidence="1">UDP-3-O-acylglucosamine N-acyltransferase</fullName>
        <ecNumber evidence="1">2.3.1.191</ecNumber>
    </recommendedName>
</protein>
<keyword id="KW-0012">Acyltransferase</keyword>
<keyword id="KW-0441">Lipid A biosynthesis</keyword>
<keyword id="KW-0444">Lipid biosynthesis</keyword>
<keyword id="KW-0443">Lipid metabolism</keyword>
<keyword id="KW-0677">Repeat</keyword>
<keyword id="KW-0808">Transferase</keyword>
<organism>
    <name type="scientific">Rickettsia conorii (strain ATCC VR-613 / Malish 7)</name>
    <dbReference type="NCBI Taxonomy" id="272944"/>
    <lineage>
        <taxon>Bacteria</taxon>
        <taxon>Pseudomonadati</taxon>
        <taxon>Pseudomonadota</taxon>
        <taxon>Alphaproteobacteria</taxon>
        <taxon>Rickettsiales</taxon>
        <taxon>Rickettsiaceae</taxon>
        <taxon>Rickettsieae</taxon>
        <taxon>Rickettsia</taxon>
        <taxon>spotted fever group</taxon>
    </lineage>
</organism>
<accession>Q92JQ7</accession>
<proteinExistence type="inferred from homology"/>
<comment type="function">
    <text evidence="1">Catalyzes the N-acylation of UDP-3-O-acylglucosamine using 3-hydroxyacyl-ACP as the acyl donor. Is involved in the biosynthesis of lipid A, a phosphorylated glycolipid that anchors the lipopolysaccharide to the outer membrane of the cell.</text>
</comment>
<comment type="catalytic activity">
    <reaction evidence="1">
        <text>a UDP-3-O-[(3R)-3-hydroxyacyl]-alpha-D-glucosamine + a (3R)-hydroxyacyl-[ACP] = a UDP-2-N,3-O-bis[(3R)-3-hydroxyacyl]-alpha-D-glucosamine + holo-[ACP] + H(+)</text>
        <dbReference type="Rhea" id="RHEA:53836"/>
        <dbReference type="Rhea" id="RHEA-COMP:9685"/>
        <dbReference type="Rhea" id="RHEA-COMP:9945"/>
        <dbReference type="ChEBI" id="CHEBI:15378"/>
        <dbReference type="ChEBI" id="CHEBI:64479"/>
        <dbReference type="ChEBI" id="CHEBI:78827"/>
        <dbReference type="ChEBI" id="CHEBI:137740"/>
        <dbReference type="ChEBI" id="CHEBI:137748"/>
        <dbReference type="EC" id="2.3.1.191"/>
    </reaction>
</comment>
<comment type="pathway">
    <text evidence="1">Bacterial outer membrane biogenesis; LPS lipid A biosynthesis.</text>
</comment>
<comment type="subunit">
    <text evidence="1">Homotrimer.</text>
</comment>
<comment type="similarity">
    <text evidence="1">Belongs to the transferase hexapeptide repeat family. LpxD subfamily.</text>
</comment>
<feature type="chain" id="PRO_0000059697" description="UDP-3-O-acylglucosamine N-acyltransferase">
    <location>
        <begin position="1"/>
        <end position="346"/>
    </location>
</feature>
<feature type="active site" description="Proton acceptor" evidence="1">
    <location>
        <position position="253"/>
    </location>
</feature>
<sequence>MVSSNFYKNLGPRKLTAIIDFLHDIIAPPKIHEDIAIHDIKILQEASPNDISFLSNPKYSEFLKTTKAAACIVPKNFTGEANPNTVLLHAQNPYFAYGKLIDFFYAPIKSYPAKIMKSAIVADSATIGKNCYIGHNVVIEDDVIIGDNSIIEAGSFIGRGVNIGRNARIEQHVSINYAIIGDDVVILAGAKIGQDGFGFSTEKGVHHKISHIGIVKIGNNVEIGANTTIDRGSLQDTIIKDLCRIDNLVQIGHGVKIGKGSIIVAQTGIAGSSTIGKYCTLGGQVGIAGHLNIGDGAQVAAQGGVAQNIEAGKIVGGSPAIPIMDWHRQSIIMKQLLKTSNSKLKK</sequence>
<evidence type="ECO:0000255" key="1">
    <source>
        <dbReference type="HAMAP-Rule" id="MF_00523"/>
    </source>
</evidence>
<reference key="1">
    <citation type="journal article" date="2001" name="Science">
        <title>Mechanisms of evolution in Rickettsia conorii and R. prowazekii.</title>
        <authorList>
            <person name="Ogata H."/>
            <person name="Audic S."/>
            <person name="Renesto-Audiffren P."/>
            <person name="Fournier P.-E."/>
            <person name="Barbe V."/>
            <person name="Samson D."/>
            <person name="Roux V."/>
            <person name="Cossart P."/>
            <person name="Weissenbach J."/>
            <person name="Claverie J.-M."/>
            <person name="Raoult D."/>
        </authorList>
    </citation>
    <scope>NUCLEOTIDE SEQUENCE [LARGE SCALE GENOMIC DNA]</scope>
    <source>
        <strain>ATCC VR-613 / Malish 7</strain>
    </source>
</reference>